<organism>
    <name type="scientific">Bos taurus</name>
    <name type="common">Bovine</name>
    <dbReference type="NCBI Taxonomy" id="9913"/>
    <lineage>
        <taxon>Eukaryota</taxon>
        <taxon>Metazoa</taxon>
        <taxon>Chordata</taxon>
        <taxon>Craniata</taxon>
        <taxon>Vertebrata</taxon>
        <taxon>Euteleostomi</taxon>
        <taxon>Mammalia</taxon>
        <taxon>Eutheria</taxon>
        <taxon>Laurasiatheria</taxon>
        <taxon>Artiodactyla</taxon>
        <taxon>Ruminantia</taxon>
        <taxon>Pecora</taxon>
        <taxon>Bovidae</taxon>
        <taxon>Bovinae</taxon>
        <taxon>Bos</taxon>
    </lineage>
</organism>
<proteinExistence type="evidence at protein level"/>
<gene>
    <name type="primary">NDUFS5</name>
</gene>
<reference key="1">
    <citation type="journal article" date="1992" name="J. Mol. Biol.">
        <title>Sequences of 20 subunits of NADH:ubiquinone oxidoreductase from bovine heart mitochondria. Application of a novel strategy for sequencing proteins using the polymerase chain reaction.</title>
        <authorList>
            <person name="Walker J.E."/>
            <person name="Arizmendi J.M."/>
            <person name="Dupuis A."/>
            <person name="Fearnley I.M."/>
            <person name="Finel M."/>
            <person name="Medd S.M."/>
            <person name="Pilkington S.J."/>
            <person name="Runswick M.J."/>
            <person name="Skehel J.M."/>
        </authorList>
    </citation>
    <scope>NUCLEOTIDE SEQUENCE [MRNA]</scope>
    <scope>PROTEIN SEQUENCE OF 2-23</scope>
    <source>
        <tissue>Heart</tissue>
    </source>
</reference>
<reference key="2">
    <citation type="submission" date="2005-08" db="EMBL/GenBank/DDBJ databases">
        <authorList>
            <consortium name="NIH - Mammalian Gene Collection (MGC) project"/>
        </authorList>
    </citation>
    <scope>NUCLEOTIDE SEQUENCE [LARGE SCALE MRNA]</scope>
    <source>
        <strain>Hereford</strain>
        <tissue>Thymus</tissue>
    </source>
</reference>
<reference key="3">
    <citation type="journal article" date="2000" name="Biochemistry">
        <title>Resolution of the membrane domain of bovine complex I into subcomplexes: implications for the structural organization of the enzyme.</title>
        <authorList>
            <person name="Sazanov L.A."/>
            <person name="Peak-Chew S.Y."/>
            <person name="Fearnley I.M."/>
            <person name="Walker J.E."/>
        </authorList>
    </citation>
    <scope>PARTIAL PROTEIN SEQUENCE</scope>
    <scope>SUBUNIT</scope>
    <scope>IDENTIFICATION IN COMPLEX I</scope>
    <scope>SUBCELLULAR LOCATION</scope>
</reference>
<reference key="4">
    <citation type="journal article" date="2008" name="Anal. Biochem.">
        <title>Subunit analysis of bovine heart complex I by reversed-phase high-performance liquid chromatography, electrospray ionization-tandem mass spectrometry, and matrix-assisted laser desorption/ionization-time-of-flight mass spectrometry.</title>
        <authorList>
            <person name="Lemma-Gray P."/>
            <person name="Valusova E."/>
            <person name="Carroll C.A."/>
            <person name="Weintraub S.T."/>
            <person name="Musatov A."/>
            <person name="Robinson N.C."/>
        </authorList>
    </citation>
    <scope>SUBUNIT</scope>
    <scope>IDENTIFICATION IN COMPLEX I</scope>
    <scope>SUBCELLULAR LOCATION</scope>
</reference>
<feature type="initiator methionine" description="Removed" evidence="5">
    <location>
        <position position="1"/>
    </location>
</feature>
<feature type="chain" id="PRO_0000118785" description="NADH dehydrogenase [ubiquinone] iron-sulfur protein 5">
    <location>
        <begin position="2"/>
        <end position="106"/>
    </location>
</feature>
<feature type="domain" description="CHCH" evidence="2">
    <location>
        <begin position="30"/>
        <end position="74"/>
    </location>
</feature>
<feature type="region of interest" description="Disordered" evidence="3">
    <location>
        <begin position="84"/>
        <end position="106"/>
    </location>
</feature>
<feature type="short sequence motif" description="Cx9C motif 1" evidence="2">
    <location>
        <begin position="33"/>
        <end position="43"/>
    </location>
</feature>
<feature type="short sequence motif" description="Cx9C motif 2" evidence="2">
    <location>
        <begin position="56"/>
        <end position="66"/>
    </location>
</feature>
<feature type="disulfide bond" evidence="2">
    <location>
        <begin position="33"/>
        <end position="66"/>
    </location>
</feature>
<feature type="disulfide bond" evidence="2">
    <location>
        <begin position="43"/>
        <end position="56"/>
    </location>
</feature>
<feature type="helix" evidence="10">
    <location>
        <begin position="6"/>
        <end position="10"/>
    </location>
</feature>
<feature type="helix" evidence="10">
    <location>
        <begin position="16"/>
        <end position="18"/>
    </location>
</feature>
<feature type="strand" evidence="11">
    <location>
        <begin position="20"/>
        <end position="23"/>
    </location>
</feature>
<feature type="helix" evidence="10">
    <location>
        <begin position="26"/>
        <end position="28"/>
    </location>
</feature>
<feature type="helix" evidence="10">
    <location>
        <begin position="34"/>
        <end position="44"/>
    </location>
</feature>
<feature type="turn" evidence="10">
    <location>
        <begin position="45"/>
        <end position="47"/>
    </location>
</feature>
<feature type="helix" evidence="10">
    <location>
        <begin position="49"/>
        <end position="55"/>
    </location>
</feature>
<feature type="helix" evidence="10">
    <location>
        <begin position="57"/>
        <end position="68"/>
    </location>
</feature>
<feature type="helix" evidence="10">
    <location>
        <begin position="70"/>
        <end position="88"/>
    </location>
</feature>
<feature type="helix" evidence="12">
    <location>
        <begin position="96"/>
        <end position="98"/>
    </location>
</feature>
<name>NDUS5_BOVIN</name>
<dbReference type="EMBL" id="X63220">
    <property type="protein sequence ID" value="CAA44905.1"/>
    <property type="molecule type" value="mRNA"/>
</dbReference>
<dbReference type="EMBL" id="BC102919">
    <property type="protein sequence ID" value="AAI02920.1"/>
    <property type="molecule type" value="mRNA"/>
</dbReference>
<dbReference type="PIR" id="S28239">
    <property type="entry name" value="S28239"/>
</dbReference>
<dbReference type="RefSeq" id="NP_788825.1">
    <property type="nucleotide sequence ID" value="NM_176652.2"/>
</dbReference>
<dbReference type="PDB" id="5LC5">
    <property type="method" value="EM"/>
    <property type="resolution" value="4.35 A"/>
    <property type="chains" value="e=1-106"/>
</dbReference>
<dbReference type="PDB" id="5LDW">
    <property type="method" value="EM"/>
    <property type="resolution" value="4.27 A"/>
    <property type="chains" value="e=2-106"/>
</dbReference>
<dbReference type="PDB" id="5LDX">
    <property type="method" value="EM"/>
    <property type="resolution" value="5.60 A"/>
    <property type="chains" value="e=1-106"/>
</dbReference>
<dbReference type="PDB" id="5O31">
    <property type="method" value="EM"/>
    <property type="resolution" value="4.13 A"/>
    <property type="chains" value="e=2-106"/>
</dbReference>
<dbReference type="PDB" id="7DGQ">
    <property type="method" value="EM"/>
    <property type="resolution" value="5.00 A"/>
    <property type="chains" value="H=2-106"/>
</dbReference>
<dbReference type="PDB" id="7DGR">
    <property type="method" value="EM"/>
    <property type="resolution" value="4.60 A"/>
    <property type="chains" value="H=2-106"/>
</dbReference>
<dbReference type="PDB" id="7DGS">
    <property type="method" value="EM"/>
    <property type="resolution" value="7.80 A"/>
    <property type="chains" value="H=2-106"/>
</dbReference>
<dbReference type="PDB" id="7DGZ">
    <property type="method" value="EM"/>
    <property type="resolution" value="3.80 A"/>
    <property type="chains" value="H=2-106"/>
</dbReference>
<dbReference type="PDB" id="7DH0">
    <property type="method" value="EM"/>
    <property type="resolution" value="4.20 A"/>
    <property type="chains" value="H=2-106"/>
</dbReference>
<dbReference type="PDB" id="7DKF">
    <property type="method" value="EM"/>
    <property type="resolution" value="8.30 A"/>
    <property type="chains" value="H2=2-106"/>
</dbReference>
<dbReference type="PDB" id="7QSD">
    <property type="method" value="EM"/>
    <property type="resolution" value="3.10 A"/>
    <property type="chains" value="e=1-106"/>
</dbReference>
<dbReference type="PDB" id="7QSK">
    <property type="method" value="EM"/>
    <property type="resolution" value="2.84 A"/>
    <property type="chains" value="e=1-106"/>
</dbReference>
<dbReference type="PDB" id="7QSL">
    <property type="method" value="EM"/>
    <property type="resolution" value="2.76 A"/>
    <property type="chains" value="e=1-106"/>
</dbReference>
<dbReference type="PDB" id="7QSM">
    <property type="method" value="EM"/>
    <property type="resolution" value="2.30 A"/>
    <property type="chains" value="e=1-106"/>
</dbReference>
<dbReference type="PDB" id="7QSN">
    <property type="method" value="EM"/>
    <property type="resolution" value="2.81 A"/>
    <property type="chains" value="e=1-106"/>
</dbReference>
<dbReference type="PDB" id="7QSO">
    <property type="method" value="EM"/>
    <property type="resolution" value="3.02 A"/>
    <property type="chains" value="e=1-106"/>
</dbReference>
<dbReference type="PDB" id="7R41">
    <property type="method" value="EM"/>
    <property type="resolution" value="2.30 A"/>
    <property type="chains" value="e=1-106"/>
</dbReference>
<dbReference type="PDB" id="7R42">
    <property type="method" value="EM"/>
    <property type="resolution" value="2.30 A"/>
    <property type="chains" value="e=1-106"/>
</dbReference>
<dbReference type="PDB" id="7R43">
    <property type="method" value="EM"/>
    <property type="resolution" value="2.40 A"/>
    <property type="chains" value="e=1-106"/>
</dbReference>
<dbReference type="PDB" id="7R44">
    <property type="method" value="EM"/>
    <property type="resolution" value="2.40 A"/>
    <property type="chains" value="e=1-106"/>
</dbReference>
<dbReference type="PDB" id="7R45">
    <property type="method" value="EM"/>
    <property type="resolution" value="2.40 A"/>
    <property type="chains" value="e=1-106"/>
</dbReference>
<dbReference type="PDB" id="7R46">
    <property type="method" value="EM"/>
    <property type="resolution" value="2.40 A"/>
    <property type="chains" value="e=1-106"/>
</dbReference>
<dbReference type="PDB" id="7R47">
    <property type="method" value="EM"/>
    <property type="resolution" value="2.30 A"/>
    <property type="chains" value="e=1-106"/>
</dbReference>
<dbReference type="PDB" id="7R48">
    <property type="method" value="EM"/>
    <property type="resolution" value="2.30 A"/>
    <property type="chains" value="e=1-106"/>
</dbReference>
<dbReference type="PDB" id="7R4C">
    <property type="method" value="EM"/>
    <property type="resolution" value="2.30 A"/>
    <property type="chains" value="e=1-106"/>
</dbReference>
<dbReference type="PDB" id="7R4D">
    <property type="method" value="EM"/>
    <property type="resolution" value="2.30 A"/>
    <property type="chains" value="e=1-106"/>
</dbReference>
<dbReference type="PDB" id="7R4F">
    <property type="method" value="EM"/>
    <property type="resolution" value="2.40 A"/>
    <property type="chains" value="e=1-106"/>
</dbReference>
<dbReference type="PDB" id="7R4G">
    <property type="method" value="EM"/>
    <property type="resolution" value="2.50 A"/>
    <property type="chains" value="e=1-106"/>
</dbReference>
<dbReference type="PDB" id="8Q0A">
    <property type="method" value="EM"/>
    <property type="resolution" value="3.10 A"/>
    <property type="chains" value="e=1-106"/>
</dbReference>
<dbReference type="PDB" id="8Q0F">
    <property type="method" value="EM"/>
    <property type="resolution" value="3.10 A"/>
    <property type="chains" value="e=1-106"/>
</dbReference>
<dbReference type="PDB" id="8Q0J">
    <property type="method" value="EM"/>
    <property type="resolution" value="3.80 A"/>
    <property type="chains" value="e=1-106"/>
</dbReference>
<dbReference type="PDB" id="8Q0M">
    <property type="method" value="EM"/>
    <property type="resolution" value="3.10 A"/>
    <property type="chains" value="e=1-106"/>
</dbReference>
<dbReference type="PDB" id="8Q0O">
    <property type="method" value="EM"/>
    <property type="resolution" value="3.10 A"/>
    <property type="chains" value="e=1-106"/>
</dbReference>
<dbReference type="PDB" id="8Q0Q">
    <property type="method" value="EM"/>
    <property type="resolution" value="3.60 A"/>
    <property type="chains" value="e=1-106"/>
</dbReference>
<dbReference type="PDB" id="8Q1P">
    <property type="method" value="EM"/>
    <property type="resolution" value="2.90 A"/>
    <property type="chains" value="e=1-106"/>
</dbReference>
<dbReference type="PDB" id="8Q1U">
    <property type="method" value="EM"/>
    <property type="resolution" value="3.30 A"/>
    <property type="chains" value="e=1-106"/>
</dbReference>
<dbReference type="PDB" id="8Q1Y">
    <property type="method" value="EM"/>
    <property type="resolution" value="2.60 A"/>
    <property type="chains" value="e=1-106"/>
</dbReference>
<dbReference type="PDB" id="8Q25">
    <property type="method" value="EM"/>
    <property type="resolution" value="2.80 A"/>
    <property type="chains" value="e=1-106"/>
</dbReference>
<dbReference type="PDB" id="8Q45">
    <property type="method" value="EM"/>
    <property type="resolution" value="2.70 A"/>
    <property type="chains" value="e=1-106"/>
</dbReference>
<dbReference type="PDB" id="8Q46">
    <property type="method" value="EM"/>
    <property type="resolution" value="2.60 A"/>
    <property type="chains" value="e=1-106"/>
</dbReference>
<dbReference type="PDB" id="8Q47">
    <property type="method" value="EM"/>
    <property type="resolution" value="2.90 A"/>
    <property type="chains" value="e=1-106"/>
</dbReference>
<dbReference type="PDB" id="8Q48">
    <property type="method" value="EM"/>
    <property type="resolution" value="2.50 A"/>
    <property type="chains" value="e=1-106"/>
</dbReference>
<dbReference type="PDB" id="8Q49">
    <property type="method" value="EM"/>
    <property type="resolution" value="2.60 A"/>
    <property type="chains" value="e=1-106"/>
</dbReference>
<dbReference type="PDB" id="8Q4A">
    <property type="method" value="EM"/>
    <property type="resolution" value="2.60 A"/>
    <property type="chains" value="e=1-106"/>
</dbReference>
<dbReference type="PDBsum" id="5LC5"/>
<dbReference type="PDBsum" id="5LDW"/>
<dbReference type="PDBsum" id="5LDX"/>
<dbReference type="PDBsum" id="5O31"/>
<dbReference type="PDBsum" id="7DGQ"/>
<dbReference type="PDBsum" id="7DGR"/>
<dbReference type="PDBsum" id="7DGS"/>
<dbReference type="PDBsum" id="7DGZ"/>
<dbReference type="PDBsum" id="7DH0"/>
<dbReference type="PDBsum" id="7DKF"/>
<dbReference type="PDBsum" id="7QSD"/>
<dbReference type="PDBsum" id="7QSK"/>
<dbReference type="PDBsum" id="7QSL"/>
<dbReference type="PDBsum" id="7QSM"/>
<dbReference type="PDBsum" id="7QSN"/>
<dbReference type="PDBsum" id="7QSO"/>
<dbReference type="PDBsum" id="7R41"/>
<dbReference type="PDBsum" id="7R42"/>
<dbReference type="PDBsum" id="7R43"/>
<dbReference type="PDBsum" id="7R44"/>
<dbReference type="PDBsum" id="7R45"/>
<dbReference type="PDBsum" id="7R46"/>
<dbReference type="PDBsum" id="7R47"/>
<dbReference type="PDBsum" id="7R48"/>
<dbReference type="PDBsum" id="7R4C"/>
<dbReference type="PDBsum" id="7R4D"/>
<dbReference type="PDBsum" id="7R4F"/>
<dbReference type="PDBsum" id="7R4G"/>
<dbReference type="PDBsum" id="8Q0A"/>
<dbReference type="PDBsum" id="8Q0F"/>
<dbReference type="PDBsum" id="8Q0J"/>
<dbReference type="PDBsum" id="8Q0M"/>
<dbReference type="PDBsum" id="8Q0O"/>
<dbReference type="PDBsum" id="8Q0Q"/>
<dbReference type="PDBsum" id="8Q1P"/>
<dbReference type="PDBsum" id="8Q1U"/>
<dbReference type="PDBsum" id="8Q1Y"/>
<dbReference type="PDBsum" id="8Q25"/>
<dbReference type="PDBsum" id="8Q45"/>
<dbReference type="PDBsum" id="8Q46"/>
<dbReference type="PDBsum" id="8Q47"/>
<dbReference type="PDBsum" id="8Q48"/>
<dbReference type="PDBsum" id="8Q49"/>
<dbReference type="PDBsum" id="8Q4A"/>
<dbReference type="EMDB" id="EMD-14127"/>
<dbReference type="EMDB" id="EMD-14132"/>
<dbReference type="EMDB" id="EMD-14133"/>
<dbReference type="EMDB" id="EMD-14134"/>
<dbReference type="EMDB" id="EMD-14139"/>
<dbReference type="EMDB" id="EMD-14140"/>
<dbReference type="EMDB" id="EMD-14251"/>
<dbReference type="EMDB" id="EMD-14256"/>
<dbReference type="EMDB" id="EMD-14261"/>
<dbReference type="EMDB" id="EMD-14266"/>
<dbReference type="EMDB" id="EMD-14272"/>
<dbReference type="EMDB" id="EMD-14277"/>
<dbReference type="EMDB" id="EMD-14282"/>
<dbReference type="EMDB" id="EMD-14287"/>
<dbReference type="EMDB" id="EMD-14292"/>
<dbReference type="EMDB" id="EMD-14297"/>
<dbReference type="EMDB" id="EMD-14302"/>
<dbReference type="EMDB" id="EMD-14307"/>
<dbReference type="EMDB" id="EMD-18051"/>
<dbReference type="EMDB" id="EMD-18052"/>
<dbReference type="EMDB" id="EMD-18054"/>
<dbReference type="EMDB" id="EMD-18055"/>
<dbReference type="EMDB" id="EMD-18057"/>
<dbReference type="EMDB" id="EMD-18059"/>
<dbReference type="EMDB" id="EMD-18066"/>
<dbReference type="EMDB" id="EMD-18067"/>
<dbReference type="EMDB" id="EMD-18068"/>
<dbReference type="EMDB" id="EMD-18069"/>
<dbReference type="EMDB" id="EMD-18138"/>
<dbReference type="EMDB" id="EMD-18139"/>
<dbReference type="EMDB" id="EMD-18140"/>
<dbReference type="EMDB" id="EMD-18141"/>
<dbReference type="EMDB" id="EMD-18142"/>
<dbReference type="EMDB" id="EMD-18143"/>
<dbReference type="EMDB" id="EMD-30673"/>
<dbReference type="EMDB" id="EMD-30674"/>
<dbReference type="EMDB" id="EMD-30675"/>
<dbReference type="EMDB" id="EMD-30676"/>
<dbReference type="EMDB" id="EMD-30677"/>
<dbReference type="EMDB" id="EMD-30706"/>
<dbReference type="EMDB" id="EMD-3731"/>
<dbReference type="EMDB" id="EMD-4032"/>
<dbReference type="EMDB" id="EMD-4040"/>
<dbReference type="EMDB" id="EMD-4041"/>
<dbReference type="SMR" id="Q02379"/>
<dbReference type="CORUM" id="Q02379"/>
<dbReference type="DIP" id="DIP-38809N"/>
<dbReference type="FunCoup" id="Q02379">
    <property type="interactions" value="1077"/>
</dbReference>
<dbReference type="IntAct" id="Q02379">
    <property type="interactions" value="2"/>
</dbReference>
<dbReference type="STRING" id="9913.ENSBTAP00000057919"/>
<dbReference type="TCDB" id="3.D.1.6.1">
    <property type="family name" value="the h+ or na+-translocating nadh dehydrogenase (ndh) family"/>
</dbReference>
<dbReference type="PaxDb" id="9913-ENSBTAP00000013507"/>
<dbReference type="Ensembl" id="ENSBTAT00000013507.5">
    <property type="protein sequence ID" value="ENSBTAP00000013507.3"/>
    <property type="gene ID" value="ENSBTAG00000010232.5"/>
</dbReference>
<dbReference type="GeneID" id="338057"/>
<dbReference type="KEGG" id="bta:338057"/>
<dbReference type="CTD" id="4725"/>
<dbReference type="VEuPathDB" id="HostDB:ENSBTAG00000010232"/>
<dbReference type="VGNC" id="VGNC:31970">
    <property type="gene designation" value="NDUFS5"/>
</dbReference>
<dbReference type="eggNOG" id="KOG4110">
    <property type="taxonomic scope" value="Eukaryota"/>
</dbReference>
<dbReference type="GeneTree" id="ENSGT00390000002919"/>
<dbReference type="HOGENOM" id="CLU_176387_0_0_1"/>
<dbReference type="InParanoid" id="Q02379"/>
<dbReference type="OMA" id="RQQRDKM"/>
<dbReference type="OrthoDB" id="9992197at2759"/>
<dbReference type="TreeFam" id="TF332111"/>
<dbReference type="Reactome" id="R-BTA-611105">
    <property type="pathway name" value="Respiratory electron transport"/>
</dbReference>
<dbReference type="Reactome" id="R-BTA-6799198">
    <property type="pathway name" value="Complex I biogenesis"/>
</dbReference>
<dbReference type="Proteomes" id="UP000009136">
    <property type="component" value="Chromosome 3"/>
</dbReference>
<dbReference type="Bgee" id="ENSBTAG00000010232">
    <property type="expression patterns" value="Expressed in oocyte and 106 other cell types or tissues"/>
</dbReference>
<dbReference type="GO" id="GO:0005743">
    <property type="term" value="C:mitochondrial inner membrane"/>
    <property type="evidence" value="ECO:0007669"/>
    <property type="project" value="UniProtKB-SubCell"/>
</dbReference>
<dbReference type="GO" id="GO:0005758">
    <property type="term" value="C:mitochondrial intermembrane space"/>
    <property type="evidence" value="ECO:0007669"/>
    <property type="project" value="UniProtKB-SubCell"/>
</dbReference>
<dbReference type="GO" id="GO:0005739">
    <property type="term" value="C:mitochondrion"/>
    <property type="evidence" value="ECO:0000305"/>
    <property type="project" value="UniProtKB"/>
</dbReference>
<dbReference type="GO" id="GO:0045271">
    <property type="term" value="C:respiratory chain complex I"/>
    <property type="evidence" value="ECO:0000314"/>
    <property type="project" value="UniProtKB"/>
</dbReference>
<dbReference type="GO" id="GO:0032981">
    <property type="term" value="P:mitochondrial respiratory chain complex I assembly"/>
    <property type="evidence" value="ECO:0000318"/>
    <property type="project" value="GO_Central"/>
</dbReference>
<dbReference type="CDD" id="cd24141">
    <property type="entry name" value="NDUFS5-like"/>
    <property type="match status" value="1"/>
</dbReference>
<dbReference type="InterPro" id="IPR019342">
    <property type="entry name" value="NADH_UbQ_OxRdtase_FeS-su5"/>
</dbReference>
<dbReference type="PANTHER" id="PTHR15224">
    <property type="entry name" value="NADH DEHYDROGENASE [UBIQUINONE] IRON-SULFUR PROTEIN 5"/>
    <property type="match status" value="1"/>
</dbReference>
<dbReference type="PANTHER" id="PTHR15224:SF1">
    <property type="entry name" value="NADH DEHYDROGENASE [UBIQUINONE] IRON-SULFUR PROTEIN 5"/>
    <property type="match status" value="1"/>
</dbReference>
<dbReference type="Pfam" id="PF10200">
    <property type="entry name" value="Ndufs5"/>
    <property type="match status" value="1"/>
</dbReference>
<dbReference type="PROSITE" id="PS51808">
    <property type="entry name" value="CHCH"/>
    <property type="match status" value="1"/>
</dbReference>
<evidence type="ECO:0000250" key="1">
    <source>
        <dbReference type="UniProtKB" id="O43920"/>
    </source>
</evidence>
<evidence type="ECO:0000255" key="2">
    <source>
        <dbReference type="PROSITE-ProRule" id="PRU01150"/>
    </source>
</evidence>
<evidence type="ECO:0000256" key="3">
    <source>
        <dbReference type="SAM" id="MobiDB-lite"/>
    </source>
</evidence>
<evidence type="ECO:0000269" key="4">
    <source>
    </source>
</evidence>
<evidence type="ECO:0000269" key="5">
    <source>
    </source>
</evidence>
<evidence type="ECO:0000269" key="6">
    <source>
    </source>
</evidence>
<evidence type="ECO:0000305" key="7"/>
<evidence type="ECO:0000305" key="8">
    <source>
    </source>
</evidence>
<evidence type="ECO:0000305" key="9">
    <source>
    </source>
</evidence>
<evidence type="ECO:0007829" key="10">
    <source>
        <dbReference type="PDB" id="7QSM"/>
    </source>
</evidence>
<evidence type="ECO:0007829" key="11">
    <source>
        <dbReference type="PDB" id="7QSN"/>
    </source>
</evidence>
<evidence type="ECO:0007829" key="12">
    <source>
        <dbReference type="PDB" id="8Q48"/>
    </source>
</evidence>
<comment type="function">
    <text evidence="1">Accessory subunit of the mitochondrial membrane respiratory chain NADH dehydrogenase (Complex I), that is believed not to be involved in catalysis. Complex I functions in the transfer of electrons from NADH to the respiratory chain. The immediate electron acceptor for the enzyme is believed to be ubiquinone.</text>
</comment>
<comment type="subunit">
    <text evidence="4 6">Mammalian complex I is composed of 45 different subunits. This is a component of the iron-sulfur (IP) fragment of the enzyme.</text>
</comment>
<comment type="subcellular location">
    <subcellularLocation>
        <location evidence="8 9">Mitochondrion inner membrane</location>
        <topology evidence="7">Peripheral membrane protein</topology>
    </subcellularLocation>
    <subcellularLocation>
        <location evidence="7">Mitochondrion intermembrane space</location>
    </subcellularLocation>
</comment>
<comment type="domain">
    <text evidence="1">Contains two C-X9-C motifs that are predicted to form a helix-coil-helix structure, permitting the formation of intramolecular disulfide bonds.</text>
</comment>
<comment type="similarity">
    <text evidence="7">Belongs to the complex I NDUFS5 subunit family.</text>
</comment>
<protein>
    <recommendedName>
        <fullName>NADH dehydrogenase [ubiquinone] iron-sulfur protein 5</fullName>
    </recommendedName>
    <alternativeName>
        <fullName>Complex I-15 kDa</fullName>
        <shortName>CI-15 kDa</shortName>
    </alternativeName>
    <alternativeName>
        <fullName>NADH-ubiquinone oxidoreductase 15 kDa subunit</fullName>
    </alternativeName>
</protein>
<sequence>MPFFDVQKRLGVDLDRWMTIQSAEQPHKIPSRCHAFEKEWIECAHGIGSIRAEKECKIEFEDFRECLLRQKTMKRLHAIRRQREKLIKEGKYTPPPHHSGQEEPRS</sequence>
<keyword id="KW-0002">3D-structure</keyword>
<keyword id="KW-0903">Direct protein sequencing</keyword>
<keyword id="KW-1015">Disulfide bond</keyword>
<keyword id="KW-0249">Electron transport</keyword>
<keyword id="KW-0472">Membrane</keyword>
<keyword id="KW-0496">Mitochondrion</keyword>
<keyword id="KW-0999">Mitochondrion inner membrane</keyword>
<keyword id="KW-1185">Reference proteome</keyword>
<keyword id="KW-0679">Respiratory chain</keyword>
<keyword id="KW-0813">Transport</keyword>
<accession>Q02379</accession>
<accession>Q3ZC47</accession>